<comment type="function">
    <text evidence="1">Component of the proteasome core, a large protease complex with broad specificity involved in protein degradation.</text>
</comment>
<comment type="activity regulation">
    <text evidence="1">The formation of the proteasomal ATPase PAN-20S proteasome complex, via the docking of the C-termini of PAN into the intersubunit pockets in the alpha-rings, triggers opening of the gate for substrate entry. Interconversion between the open-gate and close-gate conformations leads to a dynamic regulation of the 20S proteasome proteolysis activity.</text>
</comment>
<comment type="subunit">
    <text evidence="1">The 20S proteasome core is composed of 14 alpha and 14 beta subunits that assemble into four stacked heptameric rings, resulting in a barrel-shaped structure. The two inner rings, each composed of seven catalytic beta subunits, are sandwiched by two outer rings, each composed of seven alpha subunits. The catalytic chamber with the active sites is on the inside of the barrel. Has a gated structure, the ends of the cylinder being occluded by the N-termini of the alpha-subunits. Is capped at one or both ends by the proteasome regulatory ATPase, PAN.</text>
</comment>
<comment type="subcellular location">
    <subcellularLocation>
        <location evidence="1">Cytoplasm</location>
    </subcellularLocation>
</comment>
<comment type="similarity">
    <text evidence="1">Belongs to the peptidase T1A family.</text>
</comment>
<evidence type="ECO:0000255" key="1">
    <source>
        <dbReference type="HAMAP-Rule" id="MF_00289"/>
    </source>
</evidence>
<evidence type="ECO:0000256" key="2">
    <source>
        <dbReference type="SAM" id="MobiDB-lite"/>
    </source>
</evidence>
<protein>
    <recommendedName>
        <fullName evidence="1">Proteasome subunit alpha</fullName>
    </recommendedName>
    <alternativeName>
        <fullName evidence="1">20S proteasome alpha subunit</fullName>
    </alternativeName>
    <alternativeName>
        <fullName evidence="1">Proteasome core protein PsmA</fullName>
    </alternativeName>
</protein>
<gene>
    <name evidence="1" type="primary">psmA</name>
    <name type="ordered locus">OE_1275F</name>
</gene>
<feature type="chain" id="PRO_1000114972" description="Proteasome subunit alpha">
    <location>
        <begin position="1"/>
        <end position="253"/>
    </location>
</feature>
<feature type="region of interest" description="Disordered" evidence="2">
    <location>
        <begin position="229"/>
        <end position="253"/>
    </location>
</feature>
<feature type="compositionally biased region" description="Acidic residues" evidence="2">
    <location>
        <begin position="237"/>
        <end position="253"/>
    </location>
</feature>
<name>PSA_HALS3</name>
<proteinExistence type="inferred from homology"/>
<accession>B0R2T2</accession>
<keyword id="KW-0963">Cytoplasm</keyword>
<keyword id="KW-0647">Proteasome</keyword>
<reference key="1">
    <citation type="journal article" date="2008" name="Genomics">
        <title>Evolution in the laboratory: the genome of Halobacterium salinarum strain R1 compared to that of strain NRC-1.</title>
        <authorList>
            <person name="Pfeiffer F."/>
            <person name="Schuster S.C."/>
            <person name="Broicher A."/>
            <person name="Falb M."/>
            <person name="Palm P."/>
            <person name="Rodewald K."/>
            <person name="Ruepp A."/>
            <person name="Soppa J."/>
            <person name="Tittor J."/>
            <person name="Oesterhelt D."/>
        </authorList>
    </citation>
    <scope>NUCLEOTIDE SEQUENCE [LARGE SCALE GENOMIC DNA]</scope>
    <source>
        <strain>ATCC 29341 / DSM 671 / R1</strain>
    </source>
</reference>
<sequence>MQGQNQQQAYDRGITIFSPDGRLYQVEYAREAVKRGTASIGVRTPEGVVLVVDKQTRSPLLEGSSVEKLHKIDDHVGAASAGHVADARQLVDFARQQSQVERVRYDEPIGVRTLTKSVTDHIQQYTQVGGARPFGVALLIAGVEGGEPRLFETDPSGTSNEWKAVAIGSNRGDIQEFLEDEYDAGLSVDDGIDLALRALNEGREDALSGDGVGVGIVDADTGTYRELAADESQSYIDDIEDAADDSDDDDDEE</sequence>
<organism>
    <name type="scientific">Halobacterium salinarum (strain ATCC 29341 / DSM 671 / R1)</name>
    <dbReference type="NCBI Taxonomy" id="478009"/>
    <lineage>
        <taxon>Archaea</taxon>
        <taxon>Methanobacteriati</taxon>
        <taxon>Methanobacteriota</taxon>
        <taxon>Stenosarchaea group</taxon>
        <taxon>Halobacteria</taxon>
        <taxon>Halobacteriales</taxon>
        <taxon>Halobacteriaceae</taxon>
        <taxon>Halobacterium</taxon>
        <taxon>Halobacterium salinarum NRC-34001</taxon>
    </lineage>
</organism>
<dbReference type="EMBL" id="AM774415">
    <property type="protein sequence ID" value="CAP13042.1"/>
    <property type="molecule type" value="Genomic_DNA"/>
</dbReference>
<dbReference type="RefSeq" id="WP_010902078.1">
    <property type="nucleotide sequence ID" value="NC_010364.1"/>
</dbReference>
<dbReference type="SMR" id="B0R2T2"/>
<dbReference type="EnsemblBacteria" id="CAP13042">
    <property type="protein sequence ID" value="CAP13042"/>
    <property type="gene ID" value="OE_1275F"/>
</dbReference>
<dbReference type="GeneID" id="68693143"/>
<dbReference type="KEGG" id="hsl:OE_1275F"/>
<dbReference type="HOGENOM" id="CLU_035750_4_1_2"/>
<dbReference type="PhylomeDB" id="B0R2T2"/>
<dbReference type="Proteomes" id="UP000001321">
    <property type="component" value="Chromosome"/>
</dbReference>
<dbReference type="GO" id="GO:0005737">
    <property type="term" value="C:cytoplasm"/>
    <property type="evidence" value="ECO:0007669"/>
    <property type="project" value="UniProtKB-SubCell"/>
</dbReference>
<dbReference type="GO" id="GO:0019773">
    <property type="term" value="C:proteasome core complex, alpha-subunit complex"/>
    <property type="evidence" value="ECO:0000250"/>
    <property type="project" value="UniProtKB"/>
</dbReference>
<dbReference type="GO" id="GO:0004298">
    <property type="term" value="F:threonine-type endopeptidase activity"/>
    <property type="evidence" value="ECO:0007669"/>
    <property type="project" value="InterPro"/>
</dbReference>
<dbReference type="GO" id="GO:0010498">
    <property type="term" value="P:proteasomal protein catabolic process"/>
    <property type="evidence" value="ECO:0007669"/>
    <property type="project" value="UniProtKB-UniRule"/>
</dbReference>
<dbReference type="GO" id="GO:0006511">
    <property type="term" value="P:ubiquitin-dependent protein catabolic process"/>
    <property type="evidence" value="ECO:0007669"/>
    <property type="project" value="InterPro"/>
</dbReference>
<dbReference type="CDD" id="cd03756">
    <property type="entry name" value="proteasome_alpha_archeal"/>
    <property type="match status" value="1"/>
</dbReference>
<dbReference type="FunFam" id="3.60.20.10:FF:000004">
    <property type="entry name" value="Proteasome subunit alpha type-4"/>
    <property type="match status" value="1"/>
</dbReference>
<dbReference type="Gene3D" id="3.60.20.10">
    <property type="entry name" value="Glutamine Phosphoribosylpyrophosphate, subunit 1, domain 1"/>
    <property type="match status" value="1"/>
</dbReference>
<dbReference type="HAMAP" id="MF_00289_A">
    <property type="entry name" value="Proteasome_A_A"/>
    <property type="match status" value="1"/>
</dbReference>
<dbReference type="InterPro" id="IPR029055">
    <property type="entry name" value="Ntn_hydrolases_N"/>
</dbReference>
<dbReference type="InterPro" id="IPR050115">
    <property type="entry name" value="Proteasome_alpha"/>
</dbReference>
<dbReference type="InterPro" id="IPR023332">
    <property type="entry name" value="Proteasome_alpha-type"/>
</dbReference>
<dbReference type="InterPro" id="IPR019982">
    <property type="entry name" value="Proteasome_asu_arc"/>
</dbReference>
<dbReference type="InterPro" id="IPR000426">
    <property type="entry name" value="Proteasome_asu_N"/>
</dbReference>
<dbReference type="InterPro" id="IPR001353">
    <property type="entry name" value="Proteasome_sua/b"/>
</dbReference>
<dbReference type="NCBIfam" id="TIGR03633">
    <property type="entry name" value="arc_protsome_A"/>
    <property type="match status" value="1"/>
</dbReference>
<dbReference type="NCBIfam" id="NF003075">
    <property type="entry name" value="PRK03996.1"/>
    <property type="match status" value="1"/>
</dbReference>
<dbReference type="PANTHER" id="PTHR11599">
    <property type="entry name" value="PROTEASOME SUBUNIT ALPHA/BETA"/>
    <property type="match status" value="1"/>
</dbReference>
<dbReference type="Pfam" id="PF00227">
    <property type="entry name" value="Proteasome"/>
    <property type="match status" value="1"/>
</dbReference>
<dbReference type="Pfam" id="PF10584">
    <property type="entry name" value="Proteasome_A_N"/>
    <property type="match status" value="1"/>
</dbReference>
<dbReference type="SMART" id="SM00948">
    <property type="entry name" value="Proteasome_A_N"/>
    <property type="match status" value="1"/>
</dbReference>
<dbReference type="SUPFAM" id="SSF56235">
    <property type="entry name" value="N-terminal nucleophile aminohydrolases (Ntn hydrolases)"/>
    <property type="match status" value="1"/>
</dbReference>
<dbReference type="PROSITE" id="PS00388">
    <property type="entry name" value="PROTEASOME_ALPHA_1"/>
    <property type="match status" value="1"/>
</dbReference>
<dbReference type="PROSITE" id="PS51475">
    <property type="entry name" value="PROTEASOME_ALPHA_2"/>
    <property type="match status" value="1"/>
</dbReference>